<feature type="chain" id="PRO_1000130644" description="Nucleotide-binding protein RC1_3464">
    <location>
        <begin position="1"/>
        <end position="161"/>
    </location>
</feature>
<reference key="1">
    <citation type="submission" date="2007-03" db="EMBL/GenBank/DDBJ databases">
        <title>Genome sequence of Rhodospirillum centenum.</title>
        <authorList>
            <person name="Touchman J.W."/>
            <person name="Bauer C."/>
            <person name="Blankenship R.E."/>
        </authorList>
    </citation>
    <scope>NUCLEOTIDE SEQUENCE [LARGE SCALE GENOMIC DNA]</scope>
    <source>
        <strain>ATCC 51521 / SW</strain>
    </source>
</reference>
<proteinExistence type="inferred from homology"/>
<keyword id="KW-0547">Nucleotide-binding</keyword>
<keyword id="KW-1185">Reference proteome</keyword>
<gene>
    <name type="ordered locus">RC1_3464</name>
</gene>
<evidence type="ECO:0000255" key="1">
    <source>
        <dbReference type="HAMAP-Rule" id="MF_00632"/>
    </source>
</evidence>
<accession>B6IWZ8</accession>
<organism>
    <name type="scientific">Rhodospirillum centenum (strain ATCC 51521 / SW)</name>
    <dbReference type="NCBI Taxonomy" id="414684"/>
    <lineage>
        <taxon>Bacteria</taxon>
        <taxon>Pseudomonadati</taxon>
        <taxon>Pseudomonadota</taxon>
        <taxon>Alphaproteobacteria</taxon>
        <taxon>Rhodospirillales</taxon>
        <taxon>Rhodospirillaceae</taxon>
        <taxon>Rhodospirillum</taxon>
    </lineage>
</organism>
<sequence length="161" mass="18331">MPSFDIVSKTDLAEVQNAIDGVLRELQNRFDFKGSKSTIERKENEITLHTEDKTKLSQLQEMVKGYFVRRKLDPGALDWGREENAAGGTLRQVVTVRQGIDQDLAKKIVKAVKDSKMKVQASIQGDELRITGKKIDDLQECIRLVKGLKIEQPLQYVNFRD</sequence>
<name>Y3464_RHOCS</name>
<dbReference type="EMBL" id="CP000613">
    <property type="protein sequence ID" value="ACJ00822.1"/>
    <property type="molecule type" value="Genomic_DNA"/>
</dbReference>
<dbReference type="RefSeq" id="WP_012568600.1">
    <property type="nucleotide sequence ID" value="NC_011420.2"/>
</dbReference>
<dbReference type="SMR" id="B6IWZ8"/>
<dbReference type="STRING" id="414684.RC1_3464"/>
<dbReference type="KEGG" id="rce:RC1_3464"/>
<dbReference type="eggNOG" id="COG1666">
    <property type="taxonomic scope" value="Bacteria"/>
</dbReference>
<dbReference type="HOGENOM" id="CLU_099839_1_0_5"/>
<dbReference type="OrthoDB" id="9801447at2"/>
<dbReference type="Proteomes" id="UP000001591">
    <property type="component" value="Chromosome"/>
</dbReference>
<dbReference type="GO" id="GO:0005829">
    <property type="term" value="C:cytosol"/>
    <property type="evidence" value="ECO:0007669"/>
    <property type="project" value="TreeGrafter"/>
</dbReference>
<dbReference type="GO" id="GO:0000166">
    <property type="term" value="F:nucleotide binding"/>
    <property type="evidence" value="ECO:0007669"/>
    <property type="project" value="TreeGrafter"/>
</dbReference>
<dbReference type="CDD" id="cd11740">
    <property type="entry name" value="YajQ_like"/>
    <property type="match status" value="1"/>
</dbReference>
<dbReference type="Gene3D" id="3.30.70.860">
    <property type="match status" value="1"/>
</dbReference>
<dbReference type="Gene3D" id="3.30.70.990">
    <property type="entry name" value="YajQ-like, domain 2"/>
    <property type="match status" value="1"/>
</dbReference>
<dbReference type="HAMAP" id="MF_00632">
    <property type="entry name" value="YajQ"/>
    <property type="match status" value="1"/>
</dbReference>
<dbReference type="InterPro" id="IPR007551">
    <property type="entry name" value="DUF520"/>
</dbReference>
<dbReference type="InterPro" id="IPR035571">
    <property type="entry name" value="UPF0234-like_C"/>
</dbReference>
<dbReference type="InterPro" id="IPR035570">
    <property type="entry name" value="UPF0234_N"/>
</dbReference>
<dbReference type="InterPro" id="IPR036183">
    <property type="entry name" value="YajQ-like_sf"/>
</dbReference>
<dbReference type="NCBIfam" id="NF003819">
    <property type="entry name" value="PRK05412.1"/>
    <property type="match status" value="1"/>
</dbReference>
<dbReference type="PANTHER" id="PTHR30476">
    <property type="entry name" value="UPF0234 PROTEIN YAJQ"/>
    <property type="match status" value="1"/>
</dbReference>
<dbReference type="PANTHER" id="PTHR30476:SF0">
    <property type="entry name" value="UPF0234 PROTEIN YAJQ"/>
    <property type="match status" value="1"/>
</dbReference>
<dbReference type="Pfam" id="PF04461">
    <property type="entry name" value="DUF520"/>
    <property type="match status" value="1"/>
</dbReference>
<dbReference type="SUPFAM" id="SSF89963">
    <property type="entry name" value="YajQ-like"/>
    <property type="match status" value="2"/>
</dbReference>
<protein>
    <recommendedName>
        <fullName evidence="1">Nucleotide-binding protein RC1_3464</fullName>
    </recommendedName>
</protein>
<comment type="function">
    <text evidence="1">Nucleotide-binding protein.</text>
</comment>
<comment type="similarity">
    <text evidence="1">Belongs to the YajQ family.</text>
</comment>